<accession>B1YIA8</accession>
<evidence type="ECO:0000255" key="1">
    <source>
        <dbReference type="HAMAP-Rule" id="MF_00621"/>
    </source>
</evidence>
<comment type="function">
    <text evidence="1">DNA-binding global transcriptional regulator which is involved in the adaptive response to starvation and acts by directly or indirectly controlling the expression of numerous genes in response to nutrient availability. During rapid exponential growth, CodY is highly active and represses genes whose products allow adaptation to nutrient depletion.</text>
</comment>
<comment type="subcellular location">
    <subcellularLocation>
        <location evidence="1">Cytoplasm</location>
    </subcellularLocation>
</comment>
<comment type="similarity">
    <text evidence="1">Belongs to the CodY family.</text>
</comment>
<gene>
    <name evidence="1" type="primary">codY</name>
    <name type="ordered locus">Exig_1883</name>
</gene>
<protein>
    <recommendedName>
        <fullName evidence="1">Global transcriptional regulator CodY</fullName>
    </recommendedName>
</protein>
<feature type="chain" id="PRO_1000130455" description="Global transcriptional regulator CodY">
    <location>
        <begin position="1"/>
        <end position="259"/>
    </location>
</feature>
<feature type="DNA-binding region" description="H-T-H motif" evidence="1">
    <location>
        <begin position="203"/>
        <end position="222"/>
    </location>
</feature>
<feature type="region of interest" description="GAF domain" evidence="1">
    <location>
        <begin position="1"/>
        <end position="155"/>
    </location>
</feature>
<organism>
    <name type="scientific">Exiguobacterium sibiricum (strain DSM 17290 / CCUG 55495 / CIP 109462 / JCM 13490 / 255-15)</name>
    <dbReference type="NCBI Taxonomy" id="262543"/>
    <lineage>
        <taxon>Bacteria</taxon>
        <taxon>Bacillati</taxon>
        <taxon>Bacillota</taxon>
        <taxon>Bacilli</taxon>
        <taxon>Bacillales</taxon>
        <taxon>Bacillales Family XII. Incertae Sedis</taxon>
        <taxon>Exiguobacterium</taxon>
    </lineage>
</organism>
<reference key="1">
    <citation type="submission" date="2008-04" db="EMBL/GenBank/DDBJ databases">
        <title>Complete sequence of chromosome of Exiguobacterium sibiricum 255-15.</title>
        <authorList>
            <consortium name="US DOE Joint Genome Institute"/>
            <person name="Copeland A."/>
            <person name="Lucas S."/>
            <person name="Lapidus A."/>
            <person name="Glavina del Rio T."/>
            <person name="Dalin E."/>
            <person name="Tice H."/>
            <person name="Bruce D."/>
            <person name="Goodwin L."/>
            <person name="Pitluck S."/>
            <person name="Kiss H."/>
            <person name="Chertkov O."/>
            <person name="Monk C."/>
            <person name="Brettin T."/>
            <person name="Detter J.C."/>
            <person name="Han C."/>
            <person name="Kuske C.R."/>
            <person name="Schmutz J."/>
            <person name="Larimer F."/>
            <person name="Land M."/>
            <person name="Hauser L."/>
            <person name="Kyrpides N."/>
            <person name="Mikhailova N."/>
            <person name="Vishnivetskaya T."/>
            <person name="Rodrigues D.F."/>
            <person name="Gilichinsky D."/>
            <person name="Tiedje J."/>
            <person name="Richardson P."/>
        </authorList>
    </citation>
    <scope>NUCLEOTIDE SEQUENCE [LARGE SCALE GENOMIC DNA]</scope>
    <source>
        <strain>DSM 17290 / CCUG 55495 / CIP 109462 / JCM 13490 / 255-15</strain>
    </source>
</reference>
<sequence length="259" mass="29140">MNLLAKTRKLNTMLQQEASTHVDFKVMADRLSEVMESNTFIVSRRGKLLGIAIKQQIENARIRGFLEERQFPEDYTKKLFNVTETTANIAIDSEHTAFPIDNRDMFETSKTTIVPIIGGGERLGTLVLGRMLEDFNEEDLVLAEYGATVVGMEILREKAHEAEDKARKKAVVQMAINSLSYSELEAIEHIFEELDGNEGLLVASKIADRVGITRSVIVNALRKLESAGVIESRSLGMKGTYIKILNDNFLYELERIKSN</sequence>
<name>CODY_EXIS2</name>
<keyword id="KW-0963">Cytoplasm</keyword>
<keyword id="KW-0238">DNA-binding</keyword>
<keyword id="KW-1185">Reference proteome</keyword>
<keyword id="KW-0678">Repressor</keyword>
<keyword id="KW-0804">Transcription</keyword>
<keyword id="KW-0805">Transcription regulation</keyword>
<proteinExistence type="inferred from homology"/>
<dbReference type="EMBL" id="CP001022">
    <property type="protein sequence ID" value="ACB61335.1"/>
    <property type="molecule type" value="Genomic_DNA"/>
</dbReference>
<dbReference type="RefSeq" id="WP_012370753.1">
    <property type="nucleotide sequence ID" value="NC_010556.1"/>
</dbReference>
<dbReference type="SMR" id="B1YIA8"/>
<dbReference type="STRING" id="262543.Exig_1883"/>
<dbReference type="KEGG" id="esi:Exig_1883"/>
<dbReference type="eggNOG" id="COG4465">
    <property type="taxonomic scope" value="Bacteria"/>
</dbReference>
<dbReference type="HOGENOM" id="CLU_089581_0_0_9"/>
<dbReference type="OrthoDB" id="2056at2"/>
<dbReference type="Proteomes" id="UP000001681">
    <property type="component" value="Chromosome"/>
</dbReference>
<dbReference type="GO" id="GO:0005737">
    <property type="term" value="C:cytoplasm"/>
    <property type="evidence" value="ECO:0007669"/>
    <property type="project" value="UniProtKB-SubCell"/>
</dbReference>
<dbReference type="GO" id="GO:0003677">
    <property type="term" value="F:DNA binding"/>
    <property type="evidence" value="ECO:0007669"/>
    <property type="project" value="UniProtKB-UniRule"/>
</dbReference>
<dbReference type="GO" id="GO:0003700">
    <property type="term" value="F:DNA-binding transcription factor activity"/>
    <property type="evidence" value="ECO:0007669"/>
    <property type="project" value="InterPro"/>
</dbReference>
<dbReference type="GO" id="GO:0005525">
    <property type="term" value="F:GTP binding"/>
    <property type="evidence" value="ECO:0007669"/>
    <property type="project" value="InterPro"/>
</dbReference>
<dbReference type="GO" id="GO:0045892">
    <property type="term" value="P:negative regulation of DNA-templated transcription"/>
    <property type="evidence" value="ECO:0007669"/>
    <property type="project" value="UniProtKB-UniRule"/>
</dbReference>
<dbReference type="FunFam" id="1.10.10.10:FF:000034">
    <property type="entry name" value="GTP-sensing transcriptional pleiotropic repressor CodY"/>
    <property type="match status" value="1"/>
</dbReference>
<dbReference type="FunFam" id="3.30.450.40:FF:000003">
    <property type="entry name" value="GTP-sensing transcriptional pleiotropic repressor CodY"/>
    <property type="match status" value="1"/>
</dbReference>
<dbReference type="Gene3D" id="3.30.450.40">
    <property type="match status" value="1"/>
</dbReference>
<dbReference type="Gene3D" id="1.10.10.10">
    <property type="entry name" value="Winged helix-like DNA-binding domain superfamily/Winged helix DNA-binding domain"/>
    <property type="match status" value="1"/>
</dbReference>
<dbReference type="HAMAP" id="MF_00621">
    <property type="entry name" value="HTH_type_CodY"/>
    <property type="match status" value="1"/>
</dbReference>
<dbReference type="InterPro" id="IPR014154">
    <property type="entry name" value="CodY"/>
</dbReference>
<dbReference type="InterPro" id="IPR029016">
    <property type="entry name" value="GAF-like_dom_sf"/>
</dbReference>
<dbReference type="InterPro" id="IPR013198">
    <property type="entry name" value="GTP_trans_reg_CodY_C"/>
</dbReference>
<dbReference type="InterPro" id="IPR010312">
    <property type="entry name" value="Transc_reg_CodY_N"/>
</dbReference>
<dbReference type="InterPro" id="IPR036388">
    <property type="entry name" value="WH-like_DNA-bd_sf"/>
</dbReference>
<dbReference type="InterPro" id="IPR036390">
    <property type="entry name" value="WH_DNA-bd_sf"/>
</dbReference>
<dbReference type="NCBIfam" id="TIGR02787">
    <property type="entry name" value="codY_Gpos"/>
    <property type="match status" value="1"/>
</dbReference>
<dbReference type="NCBIfam" id="NF003170">
    <property type="entry name" value="PRK04158.1"/>
    <property type="match status" value="1"/>
</dbReference>
<dbReference type="PANTHER" id="PTHR40062:SF1">
    <property type="entry name" value="GLOBAL TRANSCRIPTIONAL REGULATOR CODY"/>
    <property type="match status" value="1"/>
</dbReference>
<dbReference type="PANTHER" id="PTHR40062">
    <property type="entry name" value="GTP-SENSING TRANSCRIPTIONAL PLEIOTROPIC REPRESSOR CODY"/>
    <property type="match status" value="1"/>
</dbReference>
<dbReference type="Pfam" id="PF06018">
    <property type="entry name" value="CodY"/>
    <property type="match status" value="1"/>
</dbReference>
<dbReference type="Pfam" id="PF08222">
    <property type="entry name" value="HTH_CodY"/>
    <property type="match status" value="1"/>
</dbReference>
<dbReference type="PIRSF" id="PIRSF011572">
    <property type="entry name" value="GTP_sensing_CodY"/>
    <property type="match status" value="1"/>
</dbReference>
<dbReference type="SUPFAM" id="SSF55781">
    <property type="entry name" value="GAF domain-like"/>
    <property type="match status" value="1"/>
</dbReference>
<dbReference type="SUPFAM" id="SSF46785">
    <property type="entry name" value="Winged helix' DNA-binding domain"/>
    <property type="match status" value="1"/>
</dbReference>